<keyword id="KW-0002">3D-structure</keyword>
<keyword id="KW-0998">Cell outer membrane</keyword>
<keyword id="KW-0449">Lipoprotein</keyword>
<keyword id="KW-0472">Membrane</keyword>
<keyword id="KW-0564">Palmitate</keyword>
<keyword id="KW-1185">Reference proteome</keyword>
<keyword id="KW-0732">Signal</keyword>
<reference key="1">
    <citation type="journal article" date="1996" name="DNA Res.">
        <title>A 718-kb DNA sequence of the Escherichia coli K-12 genome corresponding to the 12.7-28.0 min region on the linkage map.</title>
        <authorList>
            <person name="Oshima T."/>
            <person name="Aiba H."/>
            <person name="Baba T."/>
            <person name="Fujita K."/>
            <person name="Hayashi K."/>
            <person name="Honjo A."/>
            <person name="Ikemoto K."/>
            <person name="Inada T."/>
            <person name="Itoh T."/>
            <person name="Kajihara M."/>
            <person name="Kanai K."/>
            <person name="Kashimoto K."/>
            <person name="Kimura S."/>
            <person name="Kitagawa M."/>
            <person name="Makino K."/>
            <person name="Masuda S."/>
            <person name="Miki T."/>
            <person name="Mizobuchi K."/>
            <person name="Mori H."/>
            <person name="Motomura K."/>
            <person name="Nakamura Y."/>
            <person name="Nashimoto H."/>
            <person name="Nishio Y."/>
            <person name="Saito N."/>
            <person name="Sampei G."/>
            <person name="Seki Y."/>
            <person name="Tagami H."/>
            <person name="Takemoto K."/>
            <person name="Wada C."/>
            <person name="Yamamoto Y."/>
            <person name="Yano M."/>
            <person name="Horiuchi T."/>
        </authorList>
    </citation>
    <scope>NUCLEOTIDE SEQUENCE [LARGE SCALE GENOMIC DNA]</scope>
    <source>
        <strain>K12 / W3110 / ATCC 27325 / DSM 5911</strain>
    </source>
</reference>
<reference key="2">
    <citation type="journal article" date="1997" name="Science">
        <title>The complete genome sequence of Escherichia coli K-12.</title>
        <authorList>
            <person name="Blattner F.R."/>
            <person name="Plunkett G. III"/>
            <person name="Bloch C.A."/>
            <person name="Perna N.T."/>
            <person name="Burland V."/>
            <person name="Riley M."/>
            <person name="Collado-Vides J."/>
            <person name="Glasner J.D."/>
            <person name="Rode C.K."/>
            <person name="Mayhew G.F."/>
            <person name="Gregor J."/>
            <person name="Davis N.W."/>
            <person name="Kirkpatrick H.A."/>
            <person name="Goeden M.A."/>
            <person name="Rose D.J."/>
            <person name="Mau B."/>
            <person name="Shao Y."/>
        </authorList>
    </citation>
    <scope>NUCLEOTIDE SEQUENCE [LARGE SCALE GENOMIC DNA]</scope>
    <source>
        <strain>K12 / MG1655 / ATCC 47076</strain>
    </source>
</reference>
<reference key="3">
    <citation type="journal article" date="2006" name="Mol. Syst. Biol.">
        <title>Highly accurate genome sequences of Escherichia coli K-12 strains MG1655 and W3110.</title>
        <authorList>
            <person name="Hayashi K."/>
            <person name="Morooka N."/>
            <person name="Yamamoto Y."/>
            <person name="Fujita K."/>
            <person name="Isono K."/>
            <person name="Choi S."/>
            <person name="Ohtsubo E."/>
            <person name="Baba T."/>
            <person name="Wanner B.L."/>
            <person name="Mori H."/>
            <person name="Horiuchi T."/>
        </authorList>
    </citation>
    <scope>NUCLEOTIDE SEQUENCE [LARGE SCALE GENOMIC DNA]</scope>
    <source>
        <strain>K12 / W3110 / ATCC 27325 / DSM 5911</strain>
    </source>
</reference>
<reference key="4">
    <citation type="journal article" date="2017" name="J. Bacteriol.">
        <title>pqiABC and yebST, putative mce operons of Escherichia coli, encode transport pathways and contribute to membrane integrity.</title>
        <authorList>
            <person name="Nakayama T."/>
            <person name="Zhang-Akiyama Q.M."/>
        </authorList>
    </citation>
    <scope>FUNCTION</scope>
    <scope>SUBUNIT</scope>
    <scope>INTERACTION WITH PQIB</scope>
    <scope>SUBCELLULAR LOCATION</scope>
    <scope>INDUCTION</scope>
</reference>
<name>PQIC_ECOLI</name>
<dbReference type="EMBL" id="U00096">
    <property type="protein sequence ID" value="AAC74038.2"/>
    <property type="molecule type" value="Genomic_DNA"/>
</dbReference>
<dbReference type="EMBL" id="AP009048">
    <property type="protein sequence ID" value="BAA35710.2"/>
    <property type="status" value="ALT_INIT"/>
    <property type="molecule type" value="Genomic_DNA"/>
</dbReference>
<dbReference type="PIR" id="G64835">
    <property type="entry name" value="G64835"/>
</dbReference>
<dbReference type="RefSeq" id="NP_415472.2">
    <property type="nucleotide sequence ID" value="NC_000913.3"/>
</dbReference>
<dbReference type="RefSeq" id="WP_000759120.1">
    <property type="nucleotide sequence ID" value="NZ_STEB01000006.1"/>
</dbReference>
<dbReference type="PDB" id="8Q2C">
    <property type="method" value="X-ray"/>
    <property type="resolution" value="3.21 A"/>
    <property type="chains" value="A/B=1-187"/>
</dbReference>
<dbReference type="PDB" id="8Q2D">
    <property type="method" value="X-ray"/>
    <property type="resolution" value="2.08 A"/>
    <property type="chains" value="A/B/C=17-187"/>
</dbReference>
<dbReference type="PDBsum" id="8Q2C"/>
<dbReference type="PDBsum" id="8Q2D"/>
<dbReference type="SMR" id="P0AB10"/>
<dbReference type="BioGRID" id="4260029">
    <property type="interactions" value="6"/>
</dbReference>
<dbReference type="BioGRID" id="851311">
    <property type="interactions" value="4"/>
</dbReference>
<dbReference type="DIP" id="DIP-48221N"/>
<dbReference type="FunCoup" id="P0AB10">
    <property type="interactions" value="17"/>
</dbReference>
<dbReference type="IntAct" id="P0AB10">
    <property type="interactions" value="4"/>
</dbReference>
<dbReference type="STRING" id="511145.b0952"/>
<dbReference type="jPOST" id="P0AB10"/>
<dbReference type="PaxDb" id="511145-b0952"/>
<dbReference type="EnsemblBacteria" id="AAC74038">
    <property type="protein sequence ID" value="AAC74038"/>
    <property type="gene ID" value="b0952"/>
</dbReference>
<dbReference type="GeneID" id="75204043"/>
<dbReference type="GeneID" id="946972"/>
<dbReference type="KEGG" id="ecj:JW5127"/>
<dbReference type="KEGG" id="eco:b0952"/>
<dbReference type="KEGG" id="ecoc:C3026_05825"/>
<dbReference type="PATRIC" id="fig|511145.12.peg.986"/>
<dbReference type="EchoBASE" id="EB3483"/>
<dbReference type="eggNOG" id="COG3009">
    <property type="taxonomic scope" value="Bacteria"/>
</dbReference>
<dbReference type="HOGENOM" id="CLU_096001_3_2_6"/>
<dbReference type="InParanoid" id="P0AB10"/>
<dbReference type="OMA" id="QDGYDAM"/>
<dbReference type="OrthoDB" id="5600407at2"/>
<dbReference type="PhylomeDB" id="P0AB10"/>
<dbReference type="BioCyc" id="EcoCyc:G6492-MONOMER"/>
<dbReference type="PRO" id="PR:P0AB10"/>
<dbReference type="Proteomes" id="UP000000625">
    <property type="component" value="Chromosome"/>
</dbReference>
<dbReference type="GO" id="GO:0009279">
    <property type="term" value="C:cell outer membrane"/>
    <property type="evidence" value="ECO:0007669"/>
    <property type="project" value="UniProtKB-SubCell"/>
</dbReference>
<dbReference type="GO" id="GO:0030288">
    <property type="term" value="C:outer membrane-bounded periplasmic space"/>
    <property type="evidence" value="ECO:0000314"/>
    <property type="project" value="EcoCyc"/>
</dbReference>
<dbReference type="GO" id="GO:0042802">
    <property type="term" value="F:identical protein binding"/>
    <property type="evidence" value="ECO:0000314"/>
    <property type="project" value="EcoCyc"/>
</dbReference>
<dbReference type="GO" id="GO:0061024">
    <property type="term" value="P:membrane organization"/>
    <property type="evidence" value="ECO:0000269"/>
    <property type="project" value="EcoCyc"/>
</dbReference>
<dbReference type="FunFam" id="3.40.50.10610:FF:000004">
    <property type="entry name" value="Putative lipoprotein YmbA"/>
    <property type="match status" value="1"/>
</dbReference>
<dbReference type="Gene3D" id="3.40.50.10610">
    <property type="entry name" value="ABC-type transport auxiliary lipoprotein component"/>
    <property type="match status" value="1"/>
</dbReference>
<dbReference type="InterPro" id="IPR005586">
    <property type="entry name" value="ABC_trans_aux"/>
</dbReference>
<dbReference type="InterPro" id="IPR049736">
    <property type="entry name" value="PqiC"/>
</dbReference>
<dbReference type="NCBIfam" id="NF033620">
    <property type="entry name" value="pqiC"/>
    <property type="match status" value="1"/>
</dbReference>
<dbReference type="Pfam" id="PF03886">
    <property type="entry name" value="ABC_trans_aux"/>
    <property type="match status" value="1"/>
</dbReference>
<dbReference type="SUPFAM" id="SSF159594">
    <property type="entry name" value="XCC0632-like"/>
    <property type="match status" value="1"/>
</dbReference>
<dbReference type="PROSITE" id="PS51257">
    <property type="entry name" value="PROKAR_LIPOPROTEIN"/>
    <property type="match status" value="1"/>
</dbReference>
<gene>
    <name evidence="3" type="primary">pqiC</name>
    <name type="synonym">ymbA</name>
    <name type="ordered locus">b0952</name>
    <name type="ordered locus">JW5127</name>
</gene>
<protein>
    <recommendedName>
        <fullName evidence="4">Intermembrane transport lipoprotein PqiC</fullName>
    </recommendedName>
</protein>
<organism>
    <name type="scientific">Escherichia coli (strain K12)</name>
    <dbReference type="NCBI Taxonomy" id="83333"/>
    <lineage>
        <taxon>Bacteria</taxon>
        <taxon>Pseudomonadati</taxon>
        <taxon>Pseudomonadota</taxon>
        <taxon>Gammaproteobacteria</taxon>
        <taxon>Enterobacterales</taxon>
        <taxon>Enterobacteriaceae</taxon>
        <taxon>Escherichia</taxon>
    </lineage>
</organism>
<comment type="function">
    <text evidence="2">Component of a transport pathway that contributes to membrane integrity.</text>
</comment>
<comment type="subunit">
    <text evidence="2">May form a complex composed of PqiA, PqiB and PqiC. Interacts with PqiB.</text>
</comment>
<comment type="subcellular location">
    <subcellularLocation>
        <location evidence="2">Cell outer membrane</location>
        <topology evidence="1">Lipid-anchor</topology>
        <orientation evidence="2">Periplasmic side</orientation>
    </subcellularLocation>
</comment>
<comment type="induction">
    <text evidence="2">By paraquat.</text>
</comment>
<comment type="sequence caution" evidence="4">
    <conflict type="erroneous initiation">
        <sequence resource="EMBL-CDS" id="BAA35710"/>
    </conflict>
</comment>
<proteinExistence type="evidence at protein level"/>
<accession>P0AB10</accession>
<accession>P75866</accession>
<accession>Q9R7Q4</accession>
<feature type="signal peptide" evidence="1">
    <location>
        <begin position="1"/>
        <end position="15"/>
    </location>
</feature>
<feature type="chain" id="PRO_0000168779" description="Intermembrane transport lipoprotein PqiC">
    <location>
        <begin position="16"/>
        <end position="187"/>
    </location>
</feature>
<feature type="lipid moiety-binding region" description="N-palmitoyl cysteine" evidence="1">
    <location>
        <position position="16"/>
    </location>
</feature>
<feature type="lipid moiety-binding region" description="S-diacylglycerol cysteine" evidence="1">
    <location>
        <position position="16"/>
    </location>
</feature>
<feature type="strand" evidence="5">
    <location>
        <begin position="24"/>
        <end position="26"/>
    </location>
</feature>
<feature type="strand" evidence="5">
    <location>
        <begin position="40"/>
        <end position="48"/>
    </location>
</feature>
<feature type="helix" evidence="5">
    <location>
        <begin position="55"/>
        <end position="58"/>
    </location>
</feature>
<feature type="strand" evidence="5">
    <location>
        <begin position="59"/>
        <end position="65"/>
    </location>
</feature>
<feature type="strand" evidence="5">
    <location>
        <begin position="67"/>
        <end position="69"/>
    </location>
</feature>
<feature type="strand" evidence="5">
    <location>
        <begin position="71"/>
        <end position="81"/>
    </location>
</feature>
<feature type="helix" evidence="5">
    <location>
        <begin position="83"/>
        <end position="98"/>
    </location>
</feature>
<feature type="strand" evidence="5">
    <location>
        <begin position="102"/>
        <end position="107"/>
    </location>
</feature>
<feature type="strand" evidence="5">
    <location>
        <begin position="114"/>
        <end position="126"/>
    </location>
</feature>
<feature type="strand" evidence="5">
    <location>
        <begin position="129"/>
        <end position="141"/>
    </location>
</feature>
<feature type="strand" evidence="5">
    <location>
        <begin position="144"/>
        <end position="155"/>
    </location>
</feature>
<feature type="strand" evidence="5">
    <location>
        <begin position="158"/>
        <end position="160"/>
    </location>
</feature>
<feature type="helix" evidence="5">
    <location>
        <begin position="161"/>
        <end position="184"/>
    </location>
</feature>
<evidence type="ECO:0000255" key="1">
    <source>
        <dbReference type="PROSITE-ProRule" id="PRU00303"/>
    </source>
</evidence>
<evidence type="ECO:0000269" key="2">
    <source>
    </source>
</evidence>
<evidence type="ECO:0000303" key="3">
    <source>
    </source>
</evidence>
<evidence type="ECO:0000305" key="4"/>
<evidence type="ECO:0007829" key="5">
    <source>
        <dbReference type="PDB" id="8Q2C"/>
    </source>
</evidence>
<sequence length="187" mass="20634">MKKWLVTIAALWLAGCSSGEINKNYYQLPVVQSGTQSTASQGNRLLWVEQVTVPDYLAGNGVVYQTSDVKYVIANNNLWASPLDQQLRNTLVANLSTQLPGWVVASQPLGSAQDTLNVTVTEFNGRYDGKVIVSGEWLLNHQGQLIKRPFRLEGVQTQDGYDEMVKVLAGVWSQEAASIAQEIKRLP</sequence>